<protein>
    <recommendedName>
        <fullName>Serine/threonine-protein phosphatase 4 regulatory subunit 2</fullName>
    </recommendedName>
</protein>
<evidence type="ECO:0000250" key="1"/>
<evidence type="ECO:0000250" key="2">
    <source>
        <dbReference type="UniProtKB" id="Q9NY27"/>
    </source>
</evidence>
<evidence type="ECO:0000256" key="3">
    <source>
        <dbReference type="SAM" id="MobiDB-lite"/>
    </source>
</evidence>
<evidence type="ECO:0000305" key="4"/>
<accession>Q5R9U6</accession>
<feature type="chain" id="PRO_0000299367" description="Serine/threonine-protein phosphatase 4 regulatory subunit 2">
    <location>
        <begin position="1"/>
        <end position="417"/>
    </location>
</feature>
<feature type="region of interest" description="Disordered" evidence="3">
    <location>
        <begin position="140"/>
        <end position="417"/>
    </location>
</feature>
<feature type="compositionally biased region" description="Polar residues" evidence="3">
    <location>
        <begin position="140"/>
        <end position="149"/>
    </location>
</feature>
<feature type="compositionally biased region" description="Polar residues" evidence="3">
    <location>
        <begin position="158"/>
        <end position="170"/>
    </location>
</feature>
<feature type="compositionally biased region" description="Polar residues" evidence="3">
    <location>
        <begin position="186"/>
        <end position="196"/>
    </location>
</feature>
<feature type="compositionally biased region" description="Basic and acidic residues" evidence="3">
    <location>
        <begin position="197"/>
        <end position="213"/>
    </location>
</feature>
<feature type="compositionally biased region" description="Low complexity" evidence="3">
    <location>
        <begin position="214"/>
        <end position="226"/>
    </location>
</feature>
<feature type="compositionally biased region" description="Basic and acidic residues" evidence="3">
    <location>
        <begin position="231"/>
        <end position="258"/>
    </location>
</feature>
<feature type="compositionally biased region" description="Polar residues" evidence="3">
    <location>
        <begin position="259"/>
        <end position="269"/>
    </location>
</feature>
<feature type="compositionally biased region" description="Basic and acidic residues" evidence="3">
    <location>
        <begin position="283"/>
        <end position="297"/>
    </location>
</feature>
<feature type="compositionally biased region" description="Acidic residues" evidence="3">
    <location>
        <begin position="298"/>
        <end position="311"/>
    </location>
</feature>
<feature type="compositionally biased region" description="Basic and acidic residues" evidence="3">
    <location>
        <begin position="318"/>
        <end position="327"/>
    </location>
</feature>
<feature type="compositionally biased region" description="Acidic residues" evidence="3">
    <location>
        <begin position="338"/>
        <end position="350"/>
    </location>
</feature>
<feature type="compositionally biased region" description="Basic and acidic residues" evidence="3">
    <location>
        <begin position="353"/>
        <end position="363"/>
    </location>
</feature>
<feature type="compositionally biased region" description="Polar residues" evidence="3">
    <location>
        <begin position="385"/>
        <end position="399"/>
    </location>
</feature>
<feature type="compositionally biased region" description="Acidic residues" evidence="3">
    <location>
        <begin position="400"/>
        <end position="417"/>
    </location>
</feature>
<feature type="modified residue" description="Phosphoserine" evidence="2">
    <location>
        <position position="159"/>
    </location>
</feature>
<feature type="modified residue" description="Phosphoserine" evidence="2">
    <location>
        <position position="226"/>
    </location>
</feature>
<proteinExistence type="evidence at transcript level"/>
<sequence length="417" mass="46850">MDVERLQEALKDFEKRGKKEVCPVLDQFLCHVAKTGETMIQWSQFKGYFIFKLEKVMDDFRTSAPEPRGPPNPNVEYIPFDEMKERILKIVTGFNGIPFTIQRLCELLTDPRRNYTGTDKFLRGVEKNVMVVSCVYPSSEKNNSSSLNRMNGVMFPGNSPSYTERSNINGPGTPRPLNRPKVSLSAPMTTNGLPESTDSKEANLQQNEEKSHSDSSTSESEVSSVSPLKNKHPDEDAVEAEGHEVKRLRFDKEGEVRETASQTTSSEISSAVVGETETSSSSQDKDKDSRCTRQHCTEEDEEEDEEEEEESFMTSREMIPERKNQEKESDDALTVNEETSEENNQMEESDVSQAEKDLLHSEGSENEGPVSNDSSDCHETEELVGSNSSKTGEILSESSMENDDEATEVTDEPMEQD</sequence>
<comment type="function">
    <text evidence="1">Regulatory subunit of serine/threonine-protein phosphatase 4 (PP4). May regulate the activity of PPP4C at centrosomal microtubule organizing centers. Its interaction with the SMN complex leads to enhance the temporal localization of snRNPs, suggesting a role of PPP4C in maturation of spliceosomal snRNPs. The PPP4C-PPP4R2-PPP4R3A PP4 complex specifically dephosphorylates H2AX phosphorylated on 'Ser-140' (gamma-H2AX) generated during DNA replication and required for DNA double strand break repair (By similarity). Mediates RPA2 dephosphorylation by recruiting PPP4C to RPA2 in a DNA damage-dependent manner. RPA2 dephosphorylation is required for the efficient RPA2-mediated recruitment of RAD51 to chromatin following double strand breaks, an essential step for DNA repair (By similarity).</text>
</comment>
<comment type="subunit">
    <text evidence="1">Serine/threonine-protein phosphatase 4 (PP4) occurs in different assemblies of the catalytic and one or more regulatory subunits. Component of the PP4 complexes PPP4C-PPP4R2, PPP4C-PPP4R2-PPP4R3A and PPP4C-PPP4R2-PPP4R3B. The PPP4C-PPP4R2 complex appears to be a tetramer composed of 2 molecules of PPP4C and 2 molecules of PPP4R2. Interacts with DDX20/GEMIN3 and GEMIN4 (By similarity). Interacts with RPA2; this DNA damage-dependent interaction recruits PPP4C leading to RPA2 dephosphorylation (By similarity).</text>
</comment>
<comment type="subcellular location">
    <subcellularLocation>
        <location evidence="1">Cytoplasm</location>
        <location evidence="1">Cytoskeleton</location>
        <location evidence="1">Microtubule organizing center</location>
        <location evidence="1">Centrosome</location>
    </subcellularLocation>
    <subcellularLocation>
        <location evidence="1">Nucleus</location>
    </subcellularLocation>
    <text evidence="1">Ionizing radiation induces relocalization to nuclear foci and colocalization with RPA2.</text>
</comment>
<comment type="similarity">
    <text evidence="4">Belongs to the PPP4R2 family.</text>
</comment>
<organism>
    <name type="scientific">Pongo abelii</name>
    <name type="common">Sumatran orangutan</name>
    <name type="synonym">Pongo pygmaeus abelii</name>
    <dbReference type="NCBI Taxonomy" id="9601"/>
    <lineage>
        <taxon>Eukaryota</taxon>
        <taxon>Metazoa</taxon>
        <taxon>Chordata</taxon>
        <taxon>Craniata</taxon>
        <taxon>Vertebrata</taxon>
        <taxon>Euteleostomi</taxon>
        <taxon>Mammalia</taxon>
        <taxon>Eutheria</taxon>
        <taxon>Euarchontoglires</taxon>
        <taxon>Primates</taxon>
        <taxon>Haplorrhini</taxon>
        <taxon>Catarrhini</taxon>
        <taxon>Hominidae</taxon>
        <taxon>Pongo</taxon>
    </lineage>
</organism>
<dbReference type="EMBL" id="CR859286">
    <property type="protein sequence ID" value="CAH91464.1"/>
    <property type="molecule type" value="mRNA"/>
</dbReference>
<dbReference type="RefSeq" id="NP_001125861.1">
    <property type="nucleotide sequence ID" value="NM_001132389.1"/>
</dbReference>
<dbReference type="FunCoup" id="Q5R9U6">
    <property type="interactions" value="2756"/>
</dbReference>
<dbReference type="STRING" id="9601.ENSPPYP00000015338"/>
<dbReference type="Ensembl" id="ENSPPYT00000060241.1">
    <property type="protein sequence ID" value="ENSPPYP00000041300.1"/>
    <property type="gene ID" value="ENSPPYG00000013715.3"/>
</dbReference>
<dbReference type="GeneID" id="100172791"/>
<dbReference type="KEGG" id="pon:100172791"/>
<dbReference type="CTD" id="151987"/>
<dbReference type="eggNOG" id="KOG3175">
    <property type="taxonomic scope" value="Eukaryota"/>
</dbReference>
<dbReference type="GeneTree" id="ENSGT00940000160975"/>
<dbReference type="InParanoid" id="Q5R9U6"/>
<dbReference type="OrthoDB" id="341898at2759"/>
<dbReference type="Proteomes" id="UP000001595">
    <property type="component" value="Chromosome 3"/>
</dbReference>
<dbReference type="GO" id="GO:0005813">
    <property type="term" value="C:centrosome"/>
    <property type="evidence" value="ECO:0007669"/>
    <property type="project" value="UniProtKB-SubCell"/>
</dbReference>
<dbReference type="GO" id="GO:0005737">
    <property type="term" value="C:cytoplasm"/>
    <property type="evidence" value="ECO:0007669"/>
    <property type="project" value="UniProtKB-KW"/>
</dbReference>
<dbReference type="GO" id="GO:0005634">
    <property type="term" value="C:nucleus"/>
    <property type="evidence" value="ECO:0000250"/>
    <property type="project" value="UniProtKB"/>
</dbReference>
<dbReference type="GO" id="GO:0030289">
    <property type="term" value="C:protein phosphatase 4 complex"/>
    <property type="evidence" value="ECO:0000250"/>
    <property type="project" value="UniProtKB"/>
</dbReference>
<dbReference type="GO" id="GO:0019888">
    <property type="term" value="F:protein phosphatase regulator activity"/>
    <property type="evidence" value="ECO:0000250"/>
    <property type="project" value="UniProtKB"/>
</dbReference>
<dbReference type="GO" id="GO:0006397">
    <property type="term" value="P:mRNA processing"/>
    <property type="evidence" value="ECO:0007669"/>
    <property type="project" value="UniProtKB-KW"/>
</dbReference>
<dbReference type="GO" id="GO:0010569">
    <property type="term" value="P:regulation of double-strand break repair via homologous recombination"/>
    <property type="evidence" value="ECO:0000250"/>
    <property type="project" value="UniProtKB"/>
</dbReference>
<dbReference type="GO" id="GO:0008380">
    <property type="term" value="P:RNA splicing"/>
    <property type="evidence" value="ECO:0007669"/>
    <property type="project" value="UniProtKB-KW"/>
</dbReference>
<dbReference type="InterPro" id="IPR015267">
    <property type="entry name" value="PPP4R2"/>
</dbReference>
<dbReference type="PANTHER" id="PTHR16487">
    <property type="entry name" value="PPP4R2-RELATED PROTEIN"/>
    <property type="match status" value="1"/>
</dbReference>
<dbReference type="PANTHER" id="PTHR16487:SF5">
    <property type="entry name" value="SERINE_THREONINE-PROTEIN PHOSPHATASE 4 REGULATORY SUBUNIT 2"/>
    <property type="match status" value="1"/>
</dbReference>
<dbReference type="Pfam" id="PF09184">
    <property type="entry name" value="PPP4R2"/>
    <property type="match status" value="1"/>
</dbReference>
<keyword id="KW-0963">Cytoplasm</keyword>
<keyword id="KW-0206">Cytoskeleton</keyword>
<keyword id="KW-0507">mRNA processing</keyword>
<keyword id="KW-0508">mRNA splicing</keyword>
<keyword id="KW-0539">Nucleus</keyword>
<keyword id="KW-0597">Phosphoprotein</keyword>
<keyword id="KW-1185">Reference proteome</keyword>
<name>PP4R2_PONAB</name>
<gene>
    <name type="primary">PPP4R2</name>
</gene>
<reference key="1">
    <citation type="submission" date="2004-11" db="EMBL/GenBank/DDBJ databases">
        <authorList>
            <consortium name="The German cDNA consortium"/>
        </authorList>
    </citation>
    <scope>NUCLEOTIDE SEQUENCE [LARGE SCALE MRNA]</scope>
    <source>
        <tissue>Heart</tissue>
    </source>
</reference>